<keyword id="KW-0002">3D-structure</keyword>
<keyword id="KW-0350">Heme biosynthesis</keyword>
<keyword id="KW-0456">Lyase</keyword>
<keyword id="KW-0460">Magnesium</keyword>
<keyword id="KW-0479">Metal-binding</keyword>
<keyword id="KW-0627">Porphyrin biosynthesis</keyword>
<dbReference type="EC" id="4.2.1.24"/>
<dbReference type="EMBL" id="U38348">
    <property type="protein sequence ID" value="AAC43975.1"/>
    <property type="molecule type" value="Genomic_DNA"/>
</dbReference>
<dbReference type="EMBL" id="CP001099">
    <property type="protein sequence ID" value="ACF11151.1"/>
    <property type="molecule type" value="Genomic_DNA"/>
</dbReference>
<dbReference type="RefSeq" id="WP_012501984.1">
    <property type="nucleotide sequence ID" value="NC_011027.1"/>
</dbReference>
<dbReference type="PDB" id="1W1Z">
    <property type="method" value="X-ray"/>
    <property type="resolution" value="2.60 A"/>
    <property type="chains" value="A/B=1-328"/>
</dbReference>
<dbReference type="PDB" id="2C1H">
    <property type="method" value="X-ray"/>
    <property type="resolution" value="2.60 A"/>
    <property type="chains" value="A/B=1-328"/>
</dbReference>
<dbReference type="PDBsum" id="1W1Z"/>
<dbReference type="PDBsum" id="2C1H"/>
<dbReference type="SMR" id="Q59334"/>
<dbReference type="STRING" id="517417.Cpar_0732"/>
<dbReference type="DrugBank" id="DB04560">
    <property type="generic name" value="4,7-Dioxosebacic Acid"/>
</dbReference>
<dbReference type="KEGG" id="cpc:Cpar_0732"/>
<dbReference type="eggNOG" id="COG0113">
    <property type="taxonomic scope" value="Bacteria"/>
</dbReference>
<dbReference type="HOGENOM" id="CLU_035731_0_0_10"/>
<dbReference type="OrthoDB" id="9805001at2"/>
<dbReference type="UniPathway" id="UPA00251">
    <property type="reaction ID" value="UER00318"/>
</dbReference>
<dbReference type="EvolutionaryTrace" id="Q59334"/>
<dbReference type="Proteomes" id="UP000008811">
    <property type="component" value="Chromosome"/>
</dbReference>
<dbReference type="GO" id="GO:0005829">
    <property type="term" value="C:cytosol"/>
    <property type="evidence" value="ECO:0007669"/>
    <property type="project" value="TreeGrafter"/>
</dbReference>
<dbReference type="GO" id="GO:0004655">
    <property type="term" value="F:porphobilinogen synthase activity"/>
    <property type="evidence" value="ECO:0007669"/>
    <property type="project" value="UniProtKB-EC"/>
</dbReference>
<dbReference type="GO" id="GO:0008270">
    <property type="term" value="F:zinc ion binding"/>
    <property type="evidence" value="ECO:0007669"/>
    <property type="project" value="TreeGrafter"/>
</dbReference>
<dbReference type="GO" id="GO:0006782">
    <property type="term" value="P:protoporphyrinogen IX biosynthetic process"/>
    <property type="evidence" value="ECO:0007669"/>
    <property type="project" value="UniProtKB-UniPathway"/>
</dbReference>
<dbReference type="CDD" id="cd04823">
    <property type="entry name" value="ALAD_PBGS_aspartate_rich"/>
    <property type="match status" value="1"/>
</dbReference>
<dbReference type="FunFam" id="3.20.20.70:FF:000019">
    <property type="entry name" value="Delta-aminolevulinic acid dehydratase"/>
    <property type="match status" value="1"/>
</dbReference>
<dbReference type="Gene3D" id="3.20.20.70">
    <property type="entry name" value="Aldolase class I"/>
    <property type="match status" value="1"/>
</dbReference>
<dbReference type="InterPro" id="IPR001731">
    <property type="entry name" value="ALAD"/>
</dbReference>
<dbReference type="InterPro" id="IPR030656">
    <property type="entry name" value="ALAD_AS"/>
</dbReference>
<dbReference type="InterPro" id="IPR013785">
    <property type="entry name" value="Aldolase_TIM"/>
</dbReference>
<dbReference type="NCBIfam" id="NF006762">
    <property type="entry name" value="PRK09283.1"/>
    <property type="match status" value="1"/>
</dbReference>
<dbReference type="PANTHER" id="PTHR11458">
    <property type="entry name" value="DELTA-AMINOLEVULINIC ACID DEHYDRATASE"/>
    <property type="match status" value="1"/>
</dbReference>
<dbReference type="PANTHER" id="PTHR11458:SF0">
    <property type="entry name" value="DELTA-AMINOLEVULINIC ACID DEHYDRATASE"/>
    <property type="match status" value="1"/>
</dbReference>
<dbReference type="Pfam" id="PF00490">
    <property type="entry name" value="ALAD"/>
    <property type="match status" value="1"/>
</dbReference>
<dbReference type="PIRSF" id="PIRSF001415">
    <property type="entry name" value="Porphbilin_synth"/>
    <property type="match status" value="1"/>
</dbReference>
<dbReference type="PRINTS" id="PR00144">
    <property type="entry name" value="DALDHYDRTASE"/>
</dbReference>
<dbReference type="SMART" id="SM01004">
    <property type="entry name" value="ALAD"/>
    <property type="match status" value="1"/>
</dbReference>
<dbReference type="SUPFAM" id="SSF51569">
    <property type="entry name" value="Aldolase"/>
    <property type="match status" value="1"/>
</dbReference>
<dbReference type="PROSITE" id="PS00169">
    <property type="entry name" value="D_ALA_DEHYDRATASE"/>
    <property type="match status" value="1"/>
</dbReference>
<feature type="chain" id="PRO_0000140499" description="Delta-aminolevulinic acid dehydratase">
    <location>
        <begin position="1"/>
        <end position="328"/>
    </location>
</feature>
<feature type="active site" description="Schiff-base intermediate with substrate">
    <location>
        <position position="200"/>
    </location>
</feature>
<feature type="active site" description="Schiff-base intermediate with substrate">
    <location>
        <position position="253"/>
    </location>
</feature>
<feature type="binding site">
    <location>
        <position position="210"/>
    </location>
    <ligand>
        <name>5-aminolevulinate</name>
        <dbReference type="ChEBI" id="CHEBI:356416"/>
        <label>1</label>
    </ligand>
</feature>
<feature type="binding site">
    <location>
        <position position="222"/>
    </location>
    <ligand>
        <name>5-aminolevulinate</name>
        <dbReference type="ChEBI" id="CHEBI:356416"/>
        <label>1</label>
    </ligand>
</feature>
<feature type="binding site" evidence="1 2">
    <location>
        <position position="238"/>
    </location>
    <ligand>
        <name>Mg(2+)</name>
        <dbReference type="ChEBI" id="CHEBI:18420"/>
    </ligand>
</feature>
<feature type="binding site">
    <location>
        <position position="279"/>
    </location>
    <ligand>
        <name>5-aminolevulinate</name>
        <dbReference type="ChEBI" id="CHEBI:356416"/>
        <label>2</label>
    </ligand>
</feature>
<feature type="binding site">
    <location>
        <position position="318"/>
    </location>
    <ligand>
        <name>5-aminolevulinate</name>
        <dbReference type="ChEBI" id="CHEBI:356416"/>
        <label>2</label>
    </ligand>
</feature>
<feature type="helix" evidence="4">
    <location>
        <begin position="13"/>
        <end position="16"/>
    </location>
</feature>
<feature type="helix" evidence="4">
    <location>
        <begin position="20"/>
        <end position="26"/>
    </location>
</feature>
<feature type="helix" evidence="4">
    <location>
        <begin position="33"/>
        <end position="35"/>
    </location>
</feature>
<feature type="strand" evidence="4">
    <location>
        <begin position="36"/>
        <end position="47"/>
    </location>
</feature>
<feature type="strand" evidence="4">
    <location>
        <begin position="49"/>
        <end position="52"/>
    </location>
</feature>
<feature type="strand" evidence="4">
    <location>
        <begin position="55"/>
        <end position="62"/>
    </location>
</feature>
<feature type="helix" evidence="4">
    <location>
        <begin position="63"/>
        <end position="75"/>
    </location>
</feature>
<feature type="strand" evidence="4">
    <location>
        <begin position="80"/>
        <end position="85"/>
    </location>
</feature>
<feature type="helix" evidence="4">
    <location>
        <begin position="95"/>
        <end position="98"/>
    </location>
</feature>
<feature type="helix" evidence="4">
    <location>
        <begin position="103"/>
        <end position="114"/>
    </location>
</feature>
<feature type="strand" evidence="4">
    <location>
        <begin position="118"/>
        <end position="124"/>
    </location>
</feature>
<feature type="turn" evidence="4">
    <location>
        <begin position="127"/>
        <end position="129"/>
    </location>
</feature>
<feature type="strand" evidence="4">
    <location>
        <begin position="135"/>
        <end position="141"/>
    </location>
</feature>
<feature type="helix" evidence="4">
    <location>
        <begin position="145"/>
        <end position="162"/>
    </location>
</feature>
<feature type="strand" evidence="4">
    <location>
        <begin position="165"/>
        <end position="169"/>
    </location>
</feature>
<feature type="helix" evidence="4">
    <location>
        <begin position="176"/>
        <end position="186"/>
    </location>
</feature>
<feature type="strand" evidence="4">
    <location>
        <begin position="192"/>
        <end position="201"/>
    </location>
</feature>
<feature type="helix" evidence="4">
    <location>
        <begin position="209"/>
        <end position="212"/>
    </location>
</feature>
<feature type="turn" evidence="4">
    <location>
        <begin position="223"/>
        <end position="225"/>
    </location>
</feature>
<feature type="helix" evidence="4">
    <location>
        <begin position="233"/>
        <end position="245"/>
    </location>
</feature>
<feature type="strand" evidence="4">
    <location>
        <begin position="248"/>
        <end position="254"/>
    </location>
</feature>
<feature type="helix" evidence="4">
    <location>
        <begin position="256"/>
        <end position="258"/>
    </location>
</feature>
<feature type="helix" evidence="4">
    <location>
        <begin position="259"/>
        <end position="269"/>
    </location>
</feature>
<feature type="strand" evidence="4">
    <location>
        <begin position="273"/>
        <end position="277"/>
    </location>
</feature>
<feature type="helix" evidence="4">
    <location>
        <begin position="279"/>
        <end position="290"/>
    </location>
</feature>
<feature type="helix" evidence="4">
    <location>
        <begin position="296"/>
        <end position="310"/>
    </location>
</feature>
<feature type="strand" evidence="4">
    <location>
        <begin position="313"/>
        <end position="317"/>
    </location>
</feature>
<feature type="helix" evidence="4">
    <location>
        <begin position="320"/>
        <end position="327"/>
    </location>
</feature>
<organism>
    <name type="scientific">Chlorobaculum parvum (strain DSM 263 / NCIMB 8327)</name>
    <name type="common">Chlorobium vibrioforme subsp. thiosulfatophilum</name>
    <dbReference type="NCBI Taxonomy" id="517417"/>
    <lineage>
        <taxon>Bacteria</taxon>
        <taxon>Pseudomonadati</taxon>
        <taxon>Chlorobiota</taxon>
        <taxon>Chlorobiia</taxon>
        <taxon>Chlorobiales</taxon>
        <taxon>Chlorobiaceae</taxon>
        <taxon>Chlorobaculum</taxon>
    </lineage>
</organism>
<evidence type="ECO:0000269" key="1">
    <source>
    </source>
</evidence>
<evidence type="ECO:0000269" key="2">
    <source>
    </source>
</evidence>
<evidence type="ECO:0000305" key="3"/>
<evidence type="ECO:0007829" key="4">
    <source>
        <dbReference type="PDB" id="1W1Z"/>
    </source>
</evidence>
<sequence>MSQLDLLNIVHRPRRLRRTAALRNLVQENTLTVNDLVFPLFVMPGTNAVEEVSSMPGSFRFTIDRAVEECKELYDLGIQGIDLFGIPEQKTEDGSEAYNDNGILQQAIRAIKKAVPELCIMTDVALDPFTPFGHDGLVKDGIILNDETVEVLQKMAVSHAEAGADFVSPSDMMDGRIGAIREALDETDHSDVGILSYAAKYASSFYGPFRDALHSAPQFGDKSTYQMNPANTEEAMKEVELDIVEGADIVMVKPGLAYLDIVWRTKERFDVPVAIYHVSGEYAMVKAAAAKGWIDEDRVMMESLLCMKRAGADIIFTYYAKEAAKKLR</sequence>
<gene>
    <name type="primary">hemB</name>
    <name type="ordered locus">Cpar_0732</name>
</gene>
<proteinExistence type="evidence at protein level"/>
<reference key="1">
    <citation type="journal article" date="1996" name="J. Biol. Chem.">
        <title>Structure and expression of the Chlorobium vibrioforme hemB gene and characterization of its encoded enzyme, porphobilinogen synthase.</title>
        <authorList>
            <person name="Rhie G.-E."/>
            <person name="Avissar Y.J."/>
            <person name="Beale S.I."/>
        </authorList>
    </citation>
    <scope>NUCLEOTIDE SEQUENCE [GENOMIC DNA]</scope>
</reference>
<reference key="2">
    <citation type="submission" date="2008-06" db="EMBL/GenBank/DDBJ databases">
        <title>Complete sequence of Chlorobaculum parvum NCIB 8327.</title>
        <authorList>
            <consortium name="US DOE Joint Genome Institute"/>
            <person name="Lucas S."/>
            <person name="Copeland A."/>
            <person name="Lapidus A."/>
            <person name="Glavina del Rio T."/>
            <person name="Dalin E."/>
            <person name="Tice H."/>
            <person name="Bruce D."/>
            <person name="Goodwin L."/>
            <person name="Pitluck S."/>
            <person name="Schmutz J."/>
            <person name="Larimer F."/>
            <person name="Land M."/>
            <person name="Hauser L."/>
            <person name="Kyrpides N."/>
            <person name="Mikhailova N."/>
            <person name="Zhao F."/>
            <person name="Li T."/>
            <person name="Liu Z."/>
            <person name="Overmann J."/>
            <person name="Bryant D.A."/>
            <person name="Richardson P."/>
        </authorList>
    </citation>
    <scope>NUCLEOTIDE SEQUENCE [LARGE SCALE GENOMIC DNA]</scope>
    <source>
        <strain>DSM 263 / NCIMB 8327</strain>
    </source>
</reference>
<reference key="3">
    <citation type="journal article" date="2004" name="J. Mol. Biol.">
        <title>The X-ray structure of the plant like 5-aminolaevulinic acid dehydratase from Chlorobium vibrioforme complexed with the inhibitor laevulinic acid at 2.6 A resolution.</title>
        <authorList>
            <person name="Coates L."/>
            <person name="Beaven G."/>
            <person name="Erskine P.T."/>
            <person name="Beale S.I."/>
            <person name="Avissar Y.J."/>
            <person name="Gill R."/>
            <person name="Mohammed F."/>
            <person name="Wood S.P."/>
            <person name="Shoolingin-Jordan P."/>
            <person name="Cooper J.B."/>
        </authorList>
    </citation>
    <scope>X-RAY CRYSTALLOGRAPHY (2.6 ANGSTROMS) IN COMPLEX WITH MAGNESIUM AND LAEVULINIC ACID</scope>
    <scope>ACTIVE SITE</scope>
    <scope>SUBUNIT</scope>
</reference>
<reference key="4">
    <citation type="journal article" date="2005" name="Acta Crystallogr. D">
        <title>Structure of Chlorobium vibrioforme 5-aminolaevulinic acid dehydratase complexed with a diacid inhibitor.</title>
        <authorList>
            <person name="Coates L."/>
            <person name="Beaven G."/>
            <person name="Erskine P.T."/>
            <person name="Beale S.I."/>
            <person name="Wood S.P."/>
            <person name="Shoolingin-Jordan P.M."/>
            <person name="Cooper J.B."/>
        </authorList>
    </citation>
    <scope>X-RAY CRYSTALLOGRAPHY (2.6 ANGSTROMS) IN COMPLEX WITH MAGNESIUM AND 4,7-DIOXOSEBACIC ACID</scope>
    <scope>ACTIVE SITE</scope>
</reference>
<name>HEM2_CHLP8</name>
<protein>
    <recommendedName>
        <fullName>Delta-aminolevulinic acid dehydratase</fullName>
        <shortName>ALAD</shortName>
        <shortName>ALADH</shortName>
        <ecNumber>4.2.1.24</ecNumber>
    </recommendedName>
    <alternativeName>
        <fullName>Porphobilinogen synthase</fullName>
    </alternativeName>
</protein>
<accession>Q59334</accession>
<accession>B3QMJ8</accession>
<comment type="function">
    <text>Catalyzes an early step in the biosynthesis of tetrapyrroles. Binds two molecules of 5-aminolevulinate per subunit, each at a distinct site, and catalyzes their condensation to form porphobilinogen.</text>
</comment>
<comment type="catalytic activity">
    <reaction>
        <text>2 5-aminolevulinate = porphobilinogen + 2 H2O + H(+)</text>
        <dbReference type="Rhea" id="RHEA:24064"/>
        <dbReference type="ChEBI" id="CHEBI:15377"/>
        <dbReference type="ChEBI" id="CHEBI:15378"/>
        <dbReference type="ChEBI" id="CHEBI:58126"/>
        <dbReference type="ChEBI" id="CHEBI:356416"/>
        <dbReference type="EC" id="4.2.1.24"/>
    </reaction>
</comment>
<comment type="activity regulation">
    <text>Stimulated by magnesium, inhibited by zinc.</text>
</comment>
<comment type="pathway">
    <text>Porphyrin-containing compound metabolism; protoporphyrin-IX biosynthesis; coproporphyrinogen-III from 5-aminolevulinate: step 1/4.</text>
</comment>
<comment type="subunit">
    <text evidence="1 2">Homooctamer.</text>
</comment>
<comment type="miscellaneous">
    <text evidence="1">Does not seem to have a metal requirement for activity.</text>
</comment>
<comment type="similarity">
    <text evidence="3">Belongs to the ALAD family.</text>
</comment>